<sequence>MEKSKKDGHQAVLNEGEENELEVFGYHTQNLRRALCLVTAILTLGAVQLMFYWRPEWWVWTSCIPCPLQEADTILLRTTDEFRRYMRKKVFCLHLSTLKFPISKNPEEPLVADHHSVINQAVMKPELKLRCIQVQKIRYVWDFLKKRFQKVGLLEDSNSCFDIHHTFGLGLTNEEQEVRRLVCGPNSIEVEIQPIWKLLVKQVLNPFYVFQAFTLTLWLSQGYIEYSVAIIILTVISIVLSVYDLRQQSVKLHKLVEEHNKVQVTITVRDKGLQELESRLLVPGDILILPGKISLPCDAILIDGSCVVNEGMLTGESIPVTKTPLPQTENTMPWKSHSLEDYRKHVLFCGTEVIQVKPSAQGLVRAVVLQTGYNTAKGDLVRSILYPRPLNFKLYNDAFKFMVFLACVGVVGFFYALGVYMYHEVPPRETATMALILLSATVPPVLPAALTIGNVYAQKRLKKEKIFCISPQRINMCGQINLVCFDKTGTLTEDGLDLWGTVPTAGNCFQAVHSFASGEAVPWGPLCAAMTSCHSLILLDGTIQGDPLDLKMFEGTGWNMEDSQVASCKFGMADSSTVIKPGPKASQSPVDSITILRQFPFSSGLQRMSVIAQLAGDLHLHVYMKGAPEMVARFCRSETVPKNFSQELRNYTVQGFRVIALAHKTLKMERLSDMDHLAREKVESELAFLGLLIMENRLKKETRPVLKELSEARIRTVMVTGDNLQTAITVAKNSEMIPVGSQVVIVEANEPGDLVPASVTWQLVGTQEPGSGKKDTYIDIGNSSVPAGKGYHFAMSGKSYQVLFHHFYSMLPQILVNGTIFARMSPGQKSSLVEEFQKLNYYVGMCGDGANDCGALKMAHAGISLSEQEASVASPFTSKTANIECVPHLIREGRAALVSSFGVFKYLTMYGIIQFIGTSLLYWQLQLFGNYQYLLQDVAITLMVSLTMSINHAYPKLAPYRPAGQLLSPQLLLSVFMNSCFTCIVQVCTFLTVKQQPWYCEVYKYSECFLVNQSNLSANVSLDRNWTGNATLVPASVLSFEGTTLWPIVTFNCISAAFIFSKGKPFRKPIYANYLFSLLLASAAGLTIFILFCDFQDLYRKMEFIPTPTSWRVSILIAAFVQFCVAFFVEDAVLQNRELWLFIKKEFGFYSKSQYRILQRKLAEDSTWPPVNRTDYAVNGKNGFYVNRAYESPEEVPKGKLKLEEQASEQHFWTRL</sequence>
<evidence type="ECO:0000250" key="1"/>
<evidence type="ECO:0000255" key="2"/>
<evidence type="ECO:0000269" key="3">
    <source>
    </source>
</evidence>
<evidence type="ECO:0000303" key="4">
    <source>
    </source>
</evidence>
<evidence type="ECO:0000305" key="5"/>
<proteinExistence type="evidence at transcript level"/>
<protein>
    <recommendedName>
        <fullName>Probable cation-transporting ATPase 13A5</fullName>
        <ecNumber>7.2.2.-</ecNumber>
    </recommendedName>
    <alternativeName>
        <fullName>P5-ATPase isoform 5</fullName>
    </alternativeName>
</protein>
<name>AT135_MOUSE</name>
<accession>Q3TYU2</accession>
<accession>Q14BM0</accession>
<accession>Q8BUP1</accession>
<gene>
    <name type="primary">Atp13a5</name>
</gene>
<feature type="chain" id="PRO_0000337123" description="Probable cation-transporting ATPase 13A5">
    <location>
        <begin position="1"/>
        <end position="1216"/>
    </location>
</feature>
<feature type="transmembrane region" description="Helical" evidence="2">
    <location>
        <begin position="33"/>
        <end position="53"/>
    </location>
</feature>
<feature type="transmembrane region" description="Helical" evidence="2">
    <location>
        <begin position="198"/>
        <end position="218"/>
    </location>
</feature>
<feature type="transmembrane region" description="Helical" evidence="2">
    <location>
        <begin position="222"/>
        <end position="242"/>
    </location>
</feature>
<feature type="transmembrane region" description="Helical" evidence="2">
    <location>
        <begin position="401"/>
        <end position="421"/>
    </location>
</feature>
<feature type="transmembrane region" description="Helical" evidence="2">
    <location>
        <begin position="433"/>
        <end position="453"/>
    </location>
</feature>
<feature type="transmembrane region" description="Helical" evidence="2">
    <location>
        <begin position="896"/>
        <end position="916"/>
    </location>
</feature>
<feature type="transmembrane region" description="Helical" evidence="2">
    <location>
        <begin position="933"/>
        <end position="950"/>
    </location>
</feature>
<feature type="transmembrane region" description="Helical" evidence="2">
    <location>
        <begin position="971"/>
        <end position="991"/>
    </location>
</feature>
<feature type="transmembrane region" description="Helical" evidence="2">
    <location>
        <begin position="1040"/>
        <end position="1060"/>
    </location>
</feature>
<feature type="transmembrane region" description="Helical" evidence="2">
    <location>
        <begin position="1075"/>
        <end position="1095"/>
    </location>
</feature>
<feature type="transmembrane region" description="Helical" evidence="2">
    <location>
        <begin position="1113"/>
        <end position="1133"/>
    </location>
</feature>
<feature type="active site" description="4-aspartylphosphate intermediate" evidence="1">
    <location>
        <position position="486"/>
    </location>
</feature>
<feature type="binding site" evidence="1">
    <location>
        <position position="848"/>
    </location>
    <ligand>
        <name>Mg(2+)</name>
        <dbReference type="ChEBI" id="CHEBI:18420"/>
    </ligand>
</feature>
<feature type="binding site" evidence="1">
    <location>
        <position position="852"/>
    </location>
    <ligand>
        <name>Mg(2+)</name>
        <dbReference type="ChEBI" id="CHEBI:18420"/>
    </ligand>
</feature>
<feature type="glycosylation site" description="N-linked (GlcNAc...) asparagine" evidence="2">
    <location>
        <position position="650"/>
    </location>
</feature>
<feature type="glycosylation site" description="N-linked (GlcNAc...) asparagine" evidence="2">
    <location>
        <position position="817"/>
    </location>
</feature>
<feature type="splice variant" id="VSP_033924" description="In isoform 2." evidence="4">
    <location>
        <begin position="1"/>
        <end position="311"/>
    </location>
</feature>
<feature type="sequence conflict" description="In Ref. 2; AAI15740." evidence="5" ref="2">
    <original>A</original>
    <variation>T</variation>
    <location>
        <position position="1072"/>
    </location>
</feature>
<feature type="sequence conflict" description="In Ref. 1; BAE34470." evidence="5" ref="1">
    <original>L</original>
    <variation>V</variation>
    <location>
        <position position="1079"/>
    </location>
</feature>
<feature type="sequence conflict" description="In Ref. 1; BAC38770." evidence="5" ref="1">
    <original>E</original>
    <variation>V</variation>
    <location>
        <position position="1130"/>
    </location>
</feature>
<feature type="sequence conflict" description="In Ref. 1; BAE34470." evidence="5" ref="1">
    <original>T</original>
    <variation>A</variation>
    <location>
        <position position="1214"/>
    </location>
</feature>
<comment type="catalytic activity">
    <reaction>
        <text>ATP + H2O = ADP + phosphate + H(+)</text>
        <dbReference type="Rhea" id="RHEA:13065"/>
        <dbReference type="ChEBI" id="CHEBI:15377"/>
        <dbReference type="ChEBI" id="CHEBI:15378"/>
        <dbReference type="ChEBI" id="CHEBI:30616"/>
        <dbReference type="ChEBI" id="CHEBI:43474"/>
        <dbReference type="ChEBI" id="CHEBI:456216"/>
    </reaction>
</comment>
<comment type="subcellular location">
    <subcellularLocation>
        <location evidence="5">Membrane</location>
        <topology evidence="5">Multi-pass membrane protein</topology>
    </subcellularLocation>
</comment>
<comment type="alternative products">
    <event type="alternative splicing"/>
    <isoform>
        <id>Q3TYU2-1</id>
        <name>1</name>
        <sequence type="displayed"/>
    </isoform>
    <isoform>
        <id>Q3TYU2-2</id>
        <name>2</name>
        <sequence type="described" ref="VSP_033924"/>
    </isoform>
</comment>
<comment type="tissue specificity">
    <text evidence="3">Specifically expressed in brain and stomach.</text>
</comment>
<comment type="similarity">
    <text evidence="5">Belongs to the cation transport ATPase (P-type) (TC 3.A.3) family. Type V subfamily.</text>
</comment>
<organism>
    <name type="scientific">Mus musculus</name>
    <name type="common">Mouse</name>
    <dbReference type="NCBI Taxonomy" id="10090"/>
    <lineage>
        <taxon>Eukaryota</taxon>
        <taxon>Metazoa</taxon>
        <taxon>Chordata</taxon>
        <taxon>Craniata</taxon>
        <taxon>Vertebrata</taxon>
        <taxon>Euteleostomi</taxon>
        <taxon>Mammalia</taxon>
        <taxon>Eutheria</taxon>
        <taxon>Euarchontoglires</taxon>
        <taxon>Glires</taxon>
        <taxon>Rodentia</taxon>
        <taxon>Myomorpha</taxon>
        <taxon>Muroidea</taxon>
        <taxon>Muridae</taxon>
        <taxon>Murinae</taxon>
        <taxon>Mus</taxon>
        <taxon>Mus</taxon>
    </lineage>
</organism>
<reference key="1">
    <citation type="journal article" date="2005" name="Science">
        <title>The transcriptional landscape of the mammalian genome.</title>
        <authorList>
            <person name="Carninci P."/>
            <person name="Kasukawa T."/>
            <person name="Katayama S."/>
            <person name="Gough J."/>
            <person name="Frith M.C."/>
            <person name="Maeda N."/>
            <person name="Oyama R."/>
            <person name="Ravasi T."/>
            <person name="Lenhard B."/>
            <person name="Wells C."/>
            <person name="Kodzius R."/>
            <person name="Shimokawa K."/>
            <person name="Bajic V.B."/>
            <person name="Brenner S.E."/>
            <person name="Batalov S."/>
            <person name="Forrest A.R."/>
            <person name="Zavolan M."/>
            <person name="Davis M.J."/>
            <person name="Wilming L.G."/>
            <person name="Aidinis V."/>
            <person name="Allen J.E."/>
            <person name="Ambesi-Impiombato A."/>
            <person name="Apweiler R."/>
            <person name="Aturaliya R.N."/>
            <person name="Bailey T.L."/>
            <person name="Bansal M."/>
            <person name="Baxter L."/>
            <person name="Beisel K.W."/>
            <person name="Bersano T."/>
            <person name="Bono H."/>
            <person name="Chalk A.M."/>
            <person name="Chiu K.P."/>
            <person name="Choudhary V."/>
            <person name="Christoffels A."/>
            <person name="Clutterbuck D.R."/>
            <person name="Crowe M.L."/>
            <person name="Dalla E."/>
            <person name="Dalrymple B.P."/>
            <person name="de Bono B."/>
            <person name="Della Gatta G."/>
            <person name="di Bernardo D."/>
            <person name="Down T."/>
            <person name="Engstrom P."/>
            <person name="Fagiolini M."/>
            <person name="Faulkner G."/>
            <person name="Fletcher C.F."/>
            <person name="Fukushima T."/>
            <person name="Furuno M."/>
            <person name="Futaki S."/>
            <person name="Gariboldi M."/>
            <person name="Georgii-Hemming P."/>
            <person name="Gingeras T.R."/>
            <person name="Gojobori T."/>
            <person name="Green R.E."/>
            <person name="Gustincich S."/>
            <person name="Harbers M."/>
            <person name="Hayashi Y."/>
            <person name="Hensch T.K."/>
            <person name="Hirokawa N."/>
            <person name="Hill D."/>
            <person name="Huminiecki L."/>
            <person name="Iacono M."/>
            <person name="Ikeo K."/>
            <person name="Iwama A."/>
            <person name="Ishikawa T."/>
            <person name="Jakt M."/>
            <person name="Kanapin A."/>
            <person name="Katoh M."/>
            <person name="Kawasawa Y."/>
            <person name="Kelso J."/>
            <person name="Kitamura H."/>
            <person name="Kitano H."/>
            <person name="Kollias G."/>
            <person name="Krishnan S.P."/>
            <person name="Kruger A."/>
            <person name="Kummerfeld S.K."/>
            <person name="Kurochkin I.V."/>
            <person name="Lareau L.F."/>
            <person name="Lazarevic D."/>
            <person name="Lipovich L."/>
            <person name="Liu J."/>
            <person name="Liuni S."/>
            <person name="McWilliam S."/>
            <person name="Madan Babu M."/>
            <person name="Madera M."/>
            <person name="Marchionni L."/>
            <person name="Matsuda H."/>
            <person name="Matsuzawa S."/>
            <person name="Miki H."/>
            <person name="Mignone F."/>
            <person name="Miyake S."/>
            <person name="Morris K."/>
            <person name="Mottagui-Tabar S."/>
            <person name="Mulder N."/>
            <person name="Nakano N."/>
            <person name="Nakauchi H."/>
            <person name="Ng P."/>
            <person name="Nilsson R."/>
            <person name="Nishiguchi S."/>
            <person name="Nishikawa S."/>
            <person name="Nori F."/>
            <person name="Ohara O."/>
            <person name="Okazaki Y."/>
            <person name="Orlando V."/>
            <person name="Pang K.C."/>
            <person name="Pavan W.J."/>
            <person name="Pavesi G."/>
            <person name="Pesole G."/>
            <person name="Petrovsky N."/>
            <person name="Piazza S."/>
            <person name="Reed J."/>
            <person name="Reid J.F."/>
            <person name="Ring B.Z."/>
            <person name="Ringwald M."/>
            <person name="Rost B."/>
            <person name="Ruan Y."/>
            <person name="Salzberg S.L."/>
            <person name="Sandelin A."/>
            <person name="Schneider C."/>
            <person name="Schoenbach C."/>
            <person name="Sekiguchi K."/>
            <person name="Semple C.A."/>
            <person name="Seno S."/>
            <person name="Sessa L."/>
            <person name="Sheng Y."/>
            <person name="Shibata Y."/>
            <person name="Shimada H."/>
            <person name="Shimada K."/>
            <person name="Silva D."/>
            <person name="Sinclair B."/>
            <person name="Sperling S."/>
            <person name="Stupka E."/>
            <person name="Sugiura K."/>
            <person name="Sultana R."/>
            <person name="Takenaka Y."/>
            <person name="Taki K."/>
            <person name="Tammoja K."/>
            <person name="Tan S.L."/>
            <person name="Tang S."/>
            <person name="Taylor M.S."/>
            <person name="Tegner J."/>
            <person name="Teichmann S.A."/>
            <person name="Ueda H.R."/>
            <person name="van Nimwegen E."/>
            <person name="Verardo R."/>
            <person name="Wei C.L."/>
            <person name="Yagi K."/>
            <person name="Yamanishi H."/>
            <person name="Zabarovsky E."/>
            <person name="Zhu S."/>
            <person name="Zimmer A."/>
            <person name="Hide W."/>
            <person name="Bult C."/>
            <person name="Grimmond S.M."/>
            <person name="Teasdale R.D."/>
            <person name="Liu E.T."/>
            <person name="Brusic V."/>
            <person name="Quackenbush J."/>
            <person name="Wahlestedt C."/>
            <person name="Mattick J.S."/>
            <person name="Hume D.A."/>
            <person name="Kai C."/>
            <person name="Sasaki D."/>
            <person name="Tomaru Y."/>
            <person name="Fukuda S."/>
            <person name="Kanamori-Katayama M."/>
            <person name="Suzuki M."/>
            <person name="Aoki J."/>
            <person name="Arakawa T."/>
            <person name="Iida J."/>
            <person name="Imamura K."/>
            <person name="Itoh M."/>
            <person name="Kato T."/>
            <person name="Kawaji H."/>
            <person name="Kawagashira N."/>
            <person name="Kawashima T."/>
            <person name="Kojima M."/>
            <person name="Kondo S."/>
            <person name="Konno H."/>
            <person name="Nakano K."/>
            <person name="Ninomiya N."/>
            <person name="Nishio T."/>
            <person name="Okada M."/>
            <person name="Plessy C."/>
            <person name="Shibata K."/>
            <person name="Shiraki T."/>
            <person name="Suzuki S."/>
            <person name="Tagami M."/>
            <person name="Waki K."/>
            <person name="Watahiki A."/>
            <person name="Okamura-Oho Y."/>
            <person name="Suzuki H."/>
            <person name="Kawai J."/>
            <person name="Hayashizaki Y."/>
        </authorList>
    </citation>
    <scope>NUCLEOTIDE SEQUENCE [LARGE SCALE MRNA] (ISOFORM 1)</scope>
    <source>
        <strain>C57BL/6J</strain>
        <tissue>Hippocampus</tissue>
        <tissue>Inner ear</tissue>
    </source>
</reference>
<reference key="2">
    <citation type="journal article" date="2004" name="Genome Res.">
        <title>The status, quality, and expansion of the NIH full-length cDNA project: the Mammalian Gene Collection (MGC).</title>
        <authorList>
            <consortium name="The MGC Project Team"/>
        </authorList>
    </citation>
    <scope>NUCLEOTIDE SEQUENCE [LARGE SCALE MRNA] (ISOFORM 2)</scope>
</reference>
<reference key="3">
    <citation type="journal article" date="2004" name="Biochem. Biophys. Res. Commun.">
        <title>Characterization of the P5 subfamily of P-type transport ATPases in mice.</title>
        <authorList>
            <person name="Schultheis P.J."/>
            <person name="Hagen T.T."/>
            <person name="O'Toole K.K."/>
            <person name="Tachibana A."/>
            <person name="Burke C.R."/>
            <person name="McGill D.L."/>
            <person name="Okunade G.W."/>
            <person name="Shull G.E."/>
        </authorList>
    </citation>
    <scope>TISSUE SPECIFICITY</scope>
</reference>
<keyword id="KW-0025">Alternative splicing</keyword>
<keyword id="KW-0067">ATP-binding</keyword>
<keyword id="KW-0325">Glycoprotein</keyword>
<keyword id="KW-0460">Magnesium</keyword>
<keyword id="KW-0472">Membrane</keyword>
<keyword id="KW-0479">Metal-binding</keyword>
<keyword id="KW-0547">Nucleotide-binding</keyword>
<keyword id="KW-1185">Reference proteome</keyword>
<keyword id="KW-1278">Translocase</keyword>
<keyword id="KW-0812">Transmembrane</keyword>
<keyword id="KW-1133">Transmembrane helix</keyword>
<dbReference type="EC" id="7.2.2.-"/>
<dbReference type="EMBL" id="AK083121">
    <property type="protein sequence ID" value="BAC38770.1"/>
    <property type="molecule type" value="mRNA"/>
</dbReference>
<dbReference type="EMBL" id="AK158355">
    <property type="protein sequence ID" value="BAE34470.1"/>
    <property type="molecule type" value="mRNA"/>
</dbReference>
<dbReference type="EMBL" id="BC115739">
    <property type="protein sequence ID" value="AAI15740.1"/>
    <property type="molecule type" value="mRNA"/>
</dbReference>
<dbReference type="CCDS" id="CCDS28095.1">
    <molecule id="Q3TYU2-1"/>
</dbReference>
<dbReference type="RefSeq" id="NP_001271304.1">
    <property type="nucleotide sequence ID" value="NM_001284375.1"/>
</dbReference>
<dbReference type="RefSeq" id="NP_783581.2">
    <molecule id="Q3TYU2-1"/>
    <property type="nucleotide sequence ID" value="NM_175650.4"/>
</dbReference>
<dbReference type="SMR" id="Q3TYU2"/>
<dbReference type="FunCoup" id="Q3TYU2">
    <property type="interactions" value="11"/>
</dbReference>
<dbReference type="STRING" id="10090.ENSMUSP00000075204"/>
<dbReference type="GlyCosmos" id="Q3TYU2">
    <property type="glycosylation" value="2 sites, No reported glycans"/>
</dbReference>
<dbReference type="GlyGen" id="Q3TYU2">
    <property type="glycosylation" value="5 sites, 2 N-linked glycans (3 sites), 1 O-linked glycan (1 site)"/>
</dbReference>
<dbReference type="iPTMnet" id="Q3TYU2"/>
<dbReference type="PhosphoSitePlus" id="Q3TYU2"/>
<dbReference type="PaxDb" id="10090-ENSMUSP00000075204"/>
<dbReference type="ProteomicsDB" id="281866">
    <molecule id="Q3TYU2-1"/>
</dbReference>
<dbReference type="ProteomicsDB" id="281867">
    <molecule id="Q3TYU2-2"/>
</dbReference>
<dbReference type="Antibodypedia" id="65947">
    <property type="antibodies" value="13 antibodies from 7 providers"/>
</dbReference>
<dbReference type="DNASU" id="268878"/>
<dbReference type="Ensembl" id="ENSMUST00000075806.11">
    <molecule id="Q3TYU2-1"/>
    <property type="protein sequence ID" value="ENSMUSP00000075204.5"/>
    <property type="gene ID" value="ENSMUSG00000048939.14"/>
</dbReference>
<dbReference type="GeneID" id="268878"/>
<dbReference type="KEGG" id="mmu:268878"/>
<dbReference type="UCSC" id="uc007yvy.2">
    <molecule id="Q3TYU2-1"/>
    <property type="organism name" value="mouse"/>
</dbReference>
<dbReference type="AGR" id="MGI:2444068"/>
<dbReference type="CTD" id="344905"/>
<dbReference type="MGI" id="MGI:2444068">
    <property type="gene designation" value="Atp13a5"/>
</dbReference>
<dbReference type="VEuPathDB" id="HostDB:ENSMUSG00000048939"/>
<dbReference type="eggNOG" id="KOG0208">
    <property type="taxonomic scope" value="Eukaryota"/>
</dbReference>
<dbReference type="GeneTree" id="ENSGT00940000160327"/>
<dbReference type="HOGENOM" id="CLU_001828_0_1_1"/>
<dbReference type="InParanoid" id="Q3TYU2"/>
<dbReference type="OMA" id="KMEDCNV"/>
<dbReference type="OrthoDB" id="48943at2759"/>
<dbReference type="PhylomeDB" id="Q3TYU2"/>
<dbReference type="TreeFam" id="TF300331"/>
<dbReference type="Reactome" id="R-MMU-936837">
    <property type="pathway name" value="Ion transport by P-type ATPases"/>
</dbReference>
<dbReference type="BioGRID-ORCS" id="268878">
    <property type="hits" value="3 hits in 76 CRISPR screens"/>
</dbReference>
<dbReference type="PRO" id="PR:Q3TYU2"/>
<dbReference type="Proteomes" id="UP000000589">
    <property type="component" value="Chromosome 16"/>
</dbReference>
<dbReference type="RNAct" id="Q3TYU2">
    <property type="molecule type" value="protein"/>
</dbReference>
<dbReference type="Bgee" id="ENSMUSG00000048939">
    <property type="expression patterns" value="Expressed in vestibular membrane of cochlear duct and 87 other cell types or tissues"/>
</dbReference>
<dbReference type="ExpressionAtlas" id="Q3TYU2">
    <property type="expression patterns" value="baseline and differential"/>
</dbReference>
<dbReference type="GO" id="GO:0016020">
    <property type="term" value="C:membrane"/>
    <property type="evidence" value="ECO:0007669"/>
    <property type="project" value="UniProtKB-SubCell"/>
</dbReference>
<dbReference type="GO" id="GO:0005524">
    <property type="term" value="F:ATP binding"/>
    <property type="evidence" value="ECO:0007669"/>
    <property type="project" value="UniProtKB-KW"/>
</dbReference>
<dbReference type="GO" id="GO:0016887">
    <property type="term" value="F:ATP hydrolysis activity"/>
    <property type="evidence" value="ECO:0007669"/>
    <property type="project" value="InterPro"/>
</dbReference>
<dbReference type="GO" id="GO:0019829">
    <property type="term" value="F:ATPase-coupled monoatomic cation transmembrane transporter activity"/>
    <property type="evidence" value="ECO:0007669"/>
    <property type="project" value="InterPro"/>
</dbReference>
<dbReference type="GO" id="GO:0046872">
    <property type="term" value="F:metal ion binding"/>
    <property type="evidence" value="ECO:0007669"/>
    <property type="project" value="UniProtKB-KW"/>
</dbReference>
<dbReference type="GO" id="GO:0015662">
    <property type="term" value="F:P-type ion transporter activity"/>
    <property type="evidence" value="ECO:0007669"/>
    <property type="project" value="InterPro"/>
</dbReference>
<dbReference type="CDD" id="cd07542">
    <property type="entry name" value="P-type_ATPase_cation"/>
    <property type="match status" value="1"/>
</dbReference>
<dbReference type="FunFam" id="1.20.1110.10:FF:000023">
    <property type="entry name" value="Cation-transporting ATPase"/>
    <property type="match status" value="1"/>
</dbReference>
<dbReference type="FunFam" id="2.70.150.10:FF:000035">
    <property type="entry name" value="Cation-transporting ATPase"/>
    <property type="match status" value="1"/>
</dbReference>
<dbReference type="FunFam" id="3.40.1110.10:FF:000028">
    <property type="entry name" value="Cation-transporting ATPase"/>
    <property type="match status" value="1"/>
</dbReference>
<dbReference type="FunFam" id="3.40.50.1000:FF:000075">
    <property type="entry name" value="Cation-transporting ATPase"/>
    <property type="match status" value="1"/>
</dbReference>
<dbReference type="Gene3D" id="3.40.1110.10">
    <property type="entry name" value="Calcium-transporting ATPase, cytoplasmic domain N"/>
    <property type="match status" value="1"/>
</dbReference>
<dbReference type="Gene3D" id="2.70.150.10">
    <property type="entry name" value="Calcium-transporting ATPase, cytoplasmic transduction domain A"/>
    <property type="match status" value="1"/>
</dbReference>
<dbReference type="Gene3D" id="1.20.1110.10">
    <property type="entry name" value="Calcium-transporting ATPase, transmembrane domain"/>
    <property type="match status" value="1"/>
</dbReference>
<dbReference type="Gene3D" id="3.40.50.1000">
    <property type="entry name" value="HAD superfamily/HAD-like"/>
    <property type="match status" value="1"/>
</dbReference>
<dbReference type="InterPro" id="IPR004014">
    <property type="entry name" value="ATPase_P-typ_cation-transptr_N"/>
</dbReference>
<dbReference type="InterPro" id="IPR023299">
    <property type="entry name" value="ATPase_P-typ_cyto_dom_N"/>
</dbReference>
<dbReference type="InterPro" id="IPR018303">
    <property type="entry name" value="ATPase_P-typ_P_site"/>
</dbReference>
<dbReference type="InterPro" id="IPR023298">
    <property type="entry name" value="ATPase_P-typ_TM_dom_sf"/>
</dbReference>
<dbReference type="InterPro" id="IPR008250">
    <property type="entry name" value="ATPase_P-typ_transduc_dom_A_sf"/>
</dbReference>
<dbReference type="InterPro" id="IPR036412">
    <property type="entry name" value="HAD-like_sf"/>
</dbReference>
<dbReference type="InterPro" id="IPR023214">
    <property type="entry name" value="HAD_sf"/>
</dbReference>
<dbReference type="InterPro" id="IPR006544">
    <property type="entry name" value="P-type_TPase_V"/>
</dbReference>
<dbReference type="InterPro" id="IPR047819">
    <property type="entry name" value="P5A-ATPase_N"/>
</dbReference>
<dbReference type="InterPro" id="IPR047821">
    <property type="entry name" value="P5B-type_ATPase"/>
</dbReference>
<dbReference type="InterPro" id="IPR001757">
    <property type="entry name" value="P_typ_ATPase"/>
</dbReference>
<dbReference type="InterPro" id="IPR044492">
    <property type="entry name" value="P_typ_ATPase_HD_dom"/>
</dbReference>
<dbReference type="NCBIfam" id="TIGR01494">
    <property type="entry name" value="ATPase_P-type"/>
    <property type="match status" value="1"/>
</dbReference>
<dbReference type="NCBIfam" id="TIGR01657">
    <property type="entry name" value="P-ATPase-V"/>
    <property type="match status" value="1"/>
</dbReference>
<dbReference type="PANTHER" id="PTHR45630:SF4">
    <property type="entry name" value="CATION-TRANSPORTING ATPASE 13A5-RELATED"/>
    <property type="match status" value="1"/>
</dbReference>
<dbReference type="PANTHER" id="PTHR45630">
    <property type="entry name" value="CATION-TRANSPORTING ATPASE-RELATED"/>
    <property type="match status" value="1"/>
</dbReference>
<dbReference type="Pfam" id="PF13246">
    <property type="entry name" value="Cation_ATPase"/>
    <property type="match status" value="1"/>
</dbReference>
<dbReference type="Pfam" id="PF00690">
    <property type="entry name" value="Cation_ATPase_N"/>
    <property type="match status" value="1"/>
</dbReference>
<dbReference type="Pfam" id="PF00122">
    <property type="entry name" value="E1-E2_ATPase"/>
    <property type="match status" value="1"/>
</dbReference>
<dbReference type="Pfam" id="PF12409">
    <property type="entry name" value="P5-ATPase"/>
    <property type="match status" value="1"/>
</dbReference>
<dbReference type="PRINTS" id="PR00119">
    <property type="entry name" value="CATATPASE"/>
</dbReference>
<dbReference type="PRINTS" id="PR00121">
    <property type="entry name" value="NAKATPASE"/>
</dbReference>
<dbReference type="SFLD" id="SFLDS00003">
    <property type="entry name" value="Haloacid_Dehalogenase"/>
    <property type="match status" value="1"/>
</dbReference>
<dbReference type="SFLD" id="SFLDF00027">
    <property type="entry name" value="p-type_atpase"/>
    <property type="match status" value="1"/>
</dbReference>
<dbReference type="SUPFAM" id="SSF81653">
    <property type="entry name" value="Calcium ATPase, transduction domain A"/>
    <property type="match status" value="1"/>
</dbReference>
<dbReference type="SUPFAM" id="SSF81665">
    <property type="entry name" value="Calcium ATPase, transmembrane domain M"/>
    <property type="match status" value="1"/>
</dbReference>
<dbReference type="SUPFAM" id="SSF56784">
    <property type="entry name" value="HAD-like"/>
    <property type="match status" value="1"/>
</dbReference>
<dbReference type="SUPFAM" id="SSF81660">
    <property type="entry name" value="Metal cation-transporting ATPase, ATP-binding domain N"/>
    <property type="match status" value="1"/>
</dbReference>
<dbReference type="PROSITE" id="PS00154">
    <property type="entry name" value="ATPASE_E1_E2"/>
    <property type="match status" value="1"/>
</dbReference>